<comment type="function">
    <text evidence="1">Protein and nucleotide deglycase that catalyzes the deglycation of the Maillard adducts formed between amino groups of proteins or nucleotides and reactive carbonyl groups of glyoxals. Thus, functions as a protein deglycase that repairs methylglyoxal- and glyoxal-glycated proteins, and releases repaired proteins and lactate or glycolate, respectively. Deglycates cysteine, arginine and lysine residues in proteins, and thus reactivates these proteins by reversing glycation by glyoxals. Acts on early glycation intermediates (hemithioacetals and aminocarbinols), preventing the formation of Schiff bases and advanced glycation endproducts (AGE). Also functions as a nucleotide deglycase able to repair glycated guanine in the free nucleotide pool (GTP, GDP, GMP, dGTP) and in DNA and RNA. Is thus involved in a major nucleotide repair system named guanine glycation repair (GG repair), dedicated to reversing methylglyoxal and glyoxal damage via nucleotide sanitization and direct nucleic acid repair. Plays an important role in protecting cells from carbonyl stress.</text>
</comment>
<comment type="catalytic activity">
    <reaction evidence="1">
        <text>N(omega)-(1-hydroxy-2-oxopropyl)-L-arginyl-[protein] + H2O = lactate + L-arginyl-[protein] + H(+)</text>
        <dbReference type="Rhea" id="RHEA:49548"/>
        <dbReference type="Rhea" id="RHEA-COMP:10532"/>
        <dbReference type="Rhea" id="RHEA-COMP:12428"/>
        <dbReference type="ChEBI" id="CHEBI:15377"/>
        <dbReference type="ChEBI" id="CHEBI:15378"/>
        <dbReference type="ChEBI" id="CHEBI:24996"/>
        <dbReference type="ChEBI" id="CHEBI:29965"/>
        <dbReference type="ChEBI" id="CHEBI:131708"/>
        <dbReference type="EC" id="3.5.1.124"/>
    </reaction>
</comment>
<comment type="catalytic activity">
    <reaction evidence="1">
        <text>N(6)-(1-hydroxy-2-oxopropyl)-L-lysyl-[protein] + H2O = lactate + L-lysyl-[protein] + H(+)</text>
        <dbReference type="Rhea" id="RHEA:49552"/>
        <dbReference type="Rhea" id="RHEA-COMP:9752"/>
        <dbReference type="Rhea" id="RHEA-COMP:12429"/>
        <dbReference type="ChEBI" id="CHEBI:15377"/>
        <dbReference type="ChEBI" id="CHEBI:15378"/>
        <dbReference type="ChEBI" id="CHEBI:24996"/>
        <dbReference type="ChEBI" id="CHEBI:29969"/>
        <dbReference type="ChEBI" id="CHEBI:131709"/>
        <dbReference type="EC" id="3.5.1.124"/>
    </reaction>
</comment>
<comment type="catalytic activity">
    <reaction evidence="1">
        <text>S-(1-hydroxy-2-oxopropyl)-L-cysteinyl-[protein] + H2O = lactate + L-cysteinyl-[protein] + H(+)</text>
        <dbReference type="Rhea" id="RHEA:49556"/>
        <dbReference type="Rhea" id="RHEA-COMP:10131"/>
        <dbReference type="Rhea" id="RHEA-COMP:12430"/>
        <dbReference type="ChEBI" id="CHEBI:15377"/>
        <dbReference type="ChEBI" id="CHEBI:15378"/>
        <dbReference type="ChEBI" id="CHEBI:24996"/>
        <dbReference type="ChEBI" id="CHEBI:29950"/>
        <dbReference type="ChEBI" id="CHEBI:131710"/>
        <dbReference type="EC" id="3.5.1.124"/>
    </reaction>
</comment>
<comment type="catalytic activity">
    <reaction evidence="1">
        <text>N(omega)-(1-hydroxy-2-oxoethyl)-L-arginyl-[protein] + H2O = L-arginyl-[protein] + glycolate + H(+)</text>
        <dbReference type="Rhea" id="RHEA:57188"/>
        <dbReference type="Rhea" id="RHEA-COMP:10532"/>
        <dbReference type="Rhea" id="RHEA-COMP:14844"/>
        <dbReference type="ChEBI" id="CHEBI:15377"/>
        <dbReference type="ChEBI" id="CHEBI:15378"/>
        <dbReference type="ChEBI" id="CHEBI:29805"/>
        <dbReference type="ChEBI" id="CHEBI:29965"/>
        <dbReference type="ChEBI" id="CHEBI:141553"/>
        <dbReference type="EC" id="3.5.1.124"/>
    </reaction>
</comment>
<comment type="catalytic activity">
    <reaction evidence="1">
        <text>N(6)-(1-hydroxy-2-oxoethyl)-L-lysyl-[protein] + H2O = glycolate + L-lysyl-[protein] + H(+)</text>
        <dbReference type="Rhea" id="RHEA:57192"/>
        <dbReference type="Rhea" id="RHEA-COMP:9752"/>
        <dbReference type="Rhea" id="RHEA-COMP:14845"/>
        <dbReference type="ChEBI" id="CHEBI:15377"/>
        <dbReference type="ChEBI" id="CHEBI:15378"/>
        <dbReference type="ChEBI" id="CHEBI:29805"/>
        <dbReference type="ChEBI" id="CHEBI:29969"/>
        <dbReference type="ChEBI" id="CHEBI:141554"/>
        <dbReference type="EC" id="3.5.1.124"/>
    </reaction>
</comment>
<comment type="catalytic activity">
    <reaction evidence="1">
        <text>S-(1-hydroxy-2-oxoethyl)-L-cysteinyl-[protein] + H2O = glycolate + L-cysteinyl-[protein] + H(+)</text>
        <dbReference type="Rhea" id="RHEA:57196"/>
        <dbReference type="Rhea" id="RHEA-COMP:10131"/>
        <dbReference type="Rhea" id="RHEA-COMP:14846"/>
        <dbReference type="ChEBI" id="CHEBI:15377"/>
        <dbReference type="ChEBI" id="CHEBI:15378"/>
        <dbReference type="ChEBI" id="CHEBI:29805"/>
        <dbReference type="ChEBI" id="CHEBI:29950"/>
        <dbReference type="ChEBI" id="CHEBI:141555"/>
        <dbReference type="EC" id="3.5.1.124"/>
    </reaction>
</comment>
<comment type="catalytic activity">
    <reaction evidence="1">
        <text>N(2)-(1-hydroxy-2-oxopropyl)-dGTP + H2O = lactate + dGTP + H(+)</text>
        <dbReference type="Rhea" id="RHEA:57244"/>
        <dbReference type="ChEBI" id="CHEBI:15377"/>
        <dbReference type="ChEBI" id="CHEBI:15378"/>
        <dbReference type="ChEBI" id="CHEBI:24996"/>
        <dbReference type="ChEBI" id="CHEBI:61429"/>
        <dbReference type="ChEBI" id="CHEBI:141569"/>
    </reaction>
</comment>
<comment type="catalytic activity">
    <reaction evidence="1">
        <text>N(2)-(1-hydroxy-2-oxopropyl)-GTP + H2O = lactate + GTP + H(+)</text>
        <dbReference type="Rhea" id="RHEA:57256"/>
        <dbReference type="ChEBI" id="CHEBI:15377"/>
        <dbReference type="ChEBI" id="CHEBI:15378"/>
        <dbReference type="ChEBI" id="CHEBI:24996"/>
        <dbReference type="ChEBI" id="CHEBI:37565"/>
        <dbReference type="ChEBI" id="CHEBI:141570"/>
    </reaction>
</comment>
<comment type="catalytic activity">
    <reaction evidence="1">
        <text>N(2)-(1-hydroxy-2-oxopropyl)-GDP + H2O = lactate + GDP + H(+)</text>
        <dbReference type="Rhea" id="RHEA:57260"/>
        <dbReference type="ChEBI" id="CHEBI:15377"/>
        <dbReference type="ChEBI" id="CHEBI:15378"/>
        <dbReference type="ChEBI" id="CHEBI:24996"/>
        <dbReference type="ChEBI" id="CHEBI:58189"/>
        <dbReference type="ChEBI" id="CHEBI:141573"/>
    </reaction>
</comment>
<comment type="catalytic activity">
    <reaction evidence="1">
        <text>N(2)-(1-hydroxy-2-oxopropyl)-GMP + H2O = lactate + GMP + H(+)</text>
        <dbReference type="Rhea" id="RHEA:57268"/>
        <dbReference type="ChEBI" id="CHEBI:15377"/>
        <dbReference type="ChEBI" id="CHEBI:15378"/>
        <dbReference type="ChEBI" id="CHEBI:24996"/>
        <dbReference type="ChEBI" id="CHEBI:58115"/>
        <dbReference type="ChEBI" id="CHEBI:141575"/>
    </reaction>
</comment>
<comment type="catalytic activity">
    <reaction evidence="1">
        <text>N(2)-(1-hydroxy-2-oxoethyl)-dGTP + H2O = dGTP + glycolate + H(+)</text>
        <dbReference type="Rhea" id="RHEA:57248"/>
        <dbReference type="ChEBI" id="CHEBI:15377"/>
        <dbReference type="ChEBI" id="CHEBI:15378"/>
        <dbReference type="ChEBI" id="CHEBI:29805"/>
        <dbReference type="ChEBI" id="CHEBI:61429"/>
        <dbReference type="ChEBI" id="CHEBI:141572"/>
    </reaction>
</comment>
<comment type="catalytic activity">
    <reaction evidence="1">
        <text>N(2)-(1-hydroxy-2-oxoethyl)-GTP + H2O = glycolate + GTP + H(+)</text>
        <dbReference type="Rhea" id="RHEA:57252"/>
        <dbReference type="ChEBI" id="CHEBI:15377"/>
        <dbReference type="ChEBI" id="CHEBI:15378"/>
        <dbReference type="ChEBI" id="CHEBI:29805"/>
        <dbReference type="ChEBI" id="CHEBI:37565"/>
        <dbReference type="ChEBI" id="CHEBI:141571"/>
    </reaction>
</comment>
<comment type="catalytic activity">
    <reaction evidence="1">
        <text>N(2)-(1-hydroxy-2-oxoethyl)-GDP + H2O = glycolate + GDP + H(+)</text>
        <dbReference type="Rhea" id="RHEA:57264"/>
        <dbReference type="ChEBI" id="CHEBI:15377"/>
        <dbReference type="ChEBI" id="CHEBI:15378"/>
        <dbReference type="ChEBI" id="CHEBI:29805"/>
        <dbReference type="ChEBI" id="CHEBI:58189"/>
        <dbReference type="ChEBI" id="CHEBI:141574"/>
    </reaction>
</comment>
<comment type="catalytic activity">
    <reaction evidence="1">
        <text>N(2)-(1-hydroxy-2-oxoethyl)-GMP + H2O = glycolate + GMP + H(+)</text>
        <dbReference type="Rhea" id="RHEA:57304"/>
        <dbReference type="ChEBI" id="CHEBI:15377"/>
        <dbReference type="ChEBI" id="CHEBI:15378"/>
        <dbReference type="ChEBI" id="CHEBI:29805"/>
        <dbReference type="ChEBI" id="CHEBI:58115"/>
        <dbReference type="ChEBI" id="CHEBI:141576"/>
    </reaction>
</comment>
<comment type="catalytic activity">
    <reaction evidence="1">
        <text>an N(2)-(1-hydroxy-2-oxopropyl)-guanosine in RNA + H2O = a guanosine in RNA + lactate + H(+)</text>
        <dbReference type="Rhea" id="RHEA:57288"/>
        <dbReference type="Rhea" id="RHEA-COMP:14855"/>
        <dbReference type="Rhea" id="RHEA-COMP:14858"/>
        <dbReference type="ChEBI" id="CHEBI:15377"/>
        <dbReference type="ChEBI" id="CHEBI:15378"/>
        <dbReference type="ChEBI" id="CHEBI:24996"/>
        <dbReference type="ChEBI" id="CHEBI:74269"/>
        <dbReference type="ChEBI" id="CHEBI:141580"/>
    </reaction>
</comment>
<comment type="catalytic activity">
    <reaction evidence="1">
        <text>an N(2)-(1-hydroxy-2-oxopropyl)-2'-deoxyguanosine in DNA + H2O = a 2'-deoxyguanosine in DNA + lactate + H(+)</text>
        <dbReference type="Rhea" id="RHEA:57300"/>
        <dbReference type="Rhea" id="RHEA-COMP:11367"/>
        <dbReference type="Rhea" id="RHEA-COMP:14856"/>
        <dbReference type="ChEBI" id="CHEBI:15377"/>
        <dbReference type="ChEBI" id="CHEBI:15378"/>
        <dbReference type="ChEBI" id="CHEBI:24996"/>
        <dbReference type="ChEBI" id="CHEBI:85445"/>
        <dbReference type="ChEBI" id="CHEBI:141578"/>
    </reaction>
</comment>
<comment type="catalytic activity">
    <reaction evidence="1">
        <text>an N(2)-(1-hydroxy-2-oxoethyl)-guanosine in RNA + H2O = a guanosine in RNA + glycolate + H(+)</text>
        <dbReference type="Rhea" id="RHEA:57292"/>
        <dbReference type="Rhea" id="RHEA-COMP:14855"/>
        <dbReference type="Rhea" id="RHEA-COMP:14859"/>
        <dbReference type="ChEBI" id="CHEBI:15377"/>
        <dbReference type="ChEBI" id="CHEBI:15378"/>
        <dbReference type="ChEBI" id="CHEBI:29805"/>
        <dbReference type="ChEBI" id="CHEBI:74269"/>
        <dbReference type="ChEBI" id="CHEBI:141581"/>
    </reaction>
</comment>
<comment type="catalytic activity">
    <reaction evidence="1">
        <text>an N(2)-(1-hydroxy-2-oxoethyl)-2'-deoxyguanosine in DNA + H2O = a 2'-deoxyguanosine in DNA + glycolate + H(+)</text>
        <dbReference type="Rhea" id="RHEA:57296"/>
        <dbReference type="Rhea" id="RHEA-COMP:11367"/>
        <dbReference type="Rhea" id="RHEA-COMP:14857"/>
        <dbReference type="ChEBI" id="CHEBI:15377"/>
        <dbReference type="ChEBI" id="CHEBI:15378"/>
        <dbReference type="ChEBI" id="CHEBI:29805"/>
        <dbReference type="ChEBI" id="CHEBI:85445"/>
        <dbReference type="ChEBI" id="CHEBI:141579"/>
    </reaction>
</comment>
<comment type="subunit">
    <text evidence="1">Homodimer.</text>
</comment>
<comment type="subcellular location">
    <subcellularLocation>
        <location evidence="1">Cytoplasm</location>
    </subcellularLocation>
</comment>
<comment type="induction">
    <text evidence="1">By heat shock.</text>
</comment>
<comment type="similarity">
    <text evidence="1">Belongs to the peptidase C56 family. HchA subfamily.</text>
</comment>
<name>HCHA_ECODH</name>
<accession>B1X6B7</accession>
<feature type="chain" id="PRO_1000136178" description="Protein/nucleic acid deglycase HchA">
    <location>
        <begin position="1"/>
        <end position="283"/>
    </location>
</feature>
<feature type="active site" description="Nucleophile" evidence="1">
    <location>
        <position position="185"/>
    </location>
</feature>
<feature type="binding site" evidence="1">
    <location>
        <position position="86"/>
    </location>
    <ligand>
        <name>Zn(2+)</name>
        <dbReference type="ChEBI" id="CHEBI:29105"/>
    </ligand>
</feature>
<feature type="binding site" evidence="1">
    <location>
        <position position="91"/>
    </location>
    <ligand>
        <name>Zn(2+)</name>
        <dbReference type="ChEBI" id="CHEBI:29105"/>
    </ligand>
</feature>
<feature type="binding site" evidence="1">
    <location>
        <position position="123"/>
    </location>
    <ligand>
        <name>Zn(2+)</name>
        <dbReference type="ChEBI" id="CHEBI:29105"/>
    </ligand>
</feature>
<evidence type="ECO:0000255" key="1">
    <source>
        <dbReference type="HAMAP-Rule" id="MF_01046"/>
    </source>
</evidence>
<reference key="1">
    <citation type="journal article" date="2008" name="J. Bacteriol.">
        <title>The complete genome sequence of Escherichia coli DH10B: insights into the biology of a laboratory workhorse.</title>
        <authorList>
            <person name="Durfee T."/>
            <person name="Nelson R."/>
            <person name="Baldwin S."/>
            <person name="Plunkett G. III"/>
            <person name="Burland V."/>
            <person name="Mau B."/>
            <person name="Petrosino J.F."/>
            <person name="Qin X."/>
            <person name="Muzny D.M."/>
            <person name="Ayele M."/>
            <person name="Gibbs R.A."/>
            <person name="Csorgo B."/>
            <person name="Posfai G."/>
            <person name="Weinstock G.M."/>
            <person name="Blattner F.R."/>
        </authorList>
    </citation>
    <scope>NUCLEOTIDE SEQUENCE [LARGE SCALE GENOMIC DNA]</scope>
    <source>
        <strain>K12 / DH10B</strain>
    </source>
</reference>
<organism>
    <name type="scientific">Escherichia coli (strain K12 / DH10B)</name>
    <dbReference type="NCBI Taxonomy" id="316385"/>
    <lineage>
        <taxon>Bacteria</taxon>
        <taxon>Pseudomonadati</taxon>
        <taxon>Pseudomonadota</taxon>
        <taxon>Gammaproteobacteria</taxon>
        <taxon>Enterobacterales</taxon>
        <taxon>Enterobacteriaceae</taxon>
        <taxon>Escherichia</taxon>
    </lineage>
</organism>
<proteinExistence type="inferred from homology"/>
<dbReference type="EC" id="3.1.2.-" evidence="1"/>
<dbReference type="EC" id="3.5.1.-" evidence="1"/>
<dbReference type="EC" id="3.5.1.124" evidence="1"/>
<dbReference type="EMBL" id="CP000948">
    <property type="protein sequence ID" value="ACB03149.1"/>
    <property type="molecule type" value="Genomic_DNA"/>
</dbReference>
<dbReference type="RefSeq" id="WP_000218212.1">
    <property type="nucleotide sequence ID" value="NC_010473.1"/>
</dbReference>
<dbReference type="SMR" id="B1X6B7"/>
<dbReference type="MEROPS" id="C56.006"/>
<dbReference type="GeneID" id="86946880"/>
<dbReference type="KEGG" id="ecd:ECDH10B_2110"/>
<dbReference type="HOGENOM" id="CLU_066933_0_0_6"/>
<dbReference type="GO" id="GO:0005737">
    <property type="term" value="C:cytoplasm"/>
    <property type="evidence" value="ECO:0007669"/>
    <property type="project" value="UniProtKB-SubCell"/>
</dbReference>
<dbReference type="GO" id="GO:0019172">
    <property type="term" value="F:glyoxalase III activity"/>
    <property type="evidence" value="ECO:0007669"/>
    <property type="project" value="TreeGrafter"/>
</dbReference>
<dbReference type="GO" id="GO:0036524">
    <property type="term" value="F:protein deglycase activity"/>
    <property type="evidence" value="ECO:0007669"/>
    <property type="project" value="UniProtKB-UniRule"/>
</dbReference>
<dbReference type="GO" id="GO:0016790">
    <property type="term" value="F:thiolester hydrolase activity"/>
    <property type="evidence" value="ECO:0007669"/>
    <property type="project" value="UniProtKB-UniRule"/>
</dbReference>
<dbReference type="GO" id="GO:0008270">
    <property type="term" value="F:zinc ion binding"/>
    <property type="evidence" value="ECO:0007669"/>
    <property type="project" value="UniProtKB-UniRule"/>
</dbReference>
<dbReference type="GO" id="GO:0006281">
    <property type="term" value="P:DNA repair"/>
    <property type="evidence" value="ECO:0007669"/>
    <property type="project" value="UniProtKB-UniRule"/>
</dbReference>
<dbReference type="GO" id="GO:0019243">
    <property type="term" value="P:methylglyoxal catabolic process to D-lactate via S-lactoyl-glutathione"/>
    <property type="evidence" value="ECO:0007669"/>
    <property type="project" value="TreeGrafter"/>
</dbReference>
<dbReference type="GO" id="GO:0030091">
    <property type="term" value="P:protein repair"/>
    <property type="evidence" value="ECO:0007669"/>
    <property type="project" value="UniProtKB-UniRule"/>
</dbReference>
<dbReference type="FunFam" id="3.40.50.880:FF:000026">
    <property type="entry name" value="Protein/nucleic acid deglycase HchA"/>
    <property type="match status" value="1"/>
</dbReference>
<dbReference type="Gene3D" id="3.40.50.880">
    <property type="match status" value="1"/>
</dbReference>
<dbReference type="HAMAP" id="MF_01046">
    <property type="entry name" value="Deglycase_HchA"/>
    <property type="match status" value="1"/>
</dbReference>
<dbReference type="InterPro" id="IPR029062">
    <property type="entry name" value="Class_I_gatase-like"/>
</dbReference>
<dbReference type="InterPro" id="IPR017283">
    <property type="entry name" value="HchA"/>
</dbReference>
<dbReference type="InterPro" id="IPR050325">
    <property type="entry name" value="Prot/Nucl_acid_deglycase"/>
</dbReference>
<dbReference type="NCBIfam" id="NF003168">
    <property type="entry name" value="PRK04155.1"/>
    <property type="match status" value="1"/>
</dbReference>
<dbReference type="PANTHER" id="PTHR48094">
    <property type="entry name" value="PROTEIN/NUCLEIC ACID DEGLYCASE DJ-1-RELATED"/>
    <property type="match status" value="1"/>
</dbReference>
<dbReference type="PANTHER" id="PTHR48094:SF20">
    <property type="entry name" value="PROTEIN_NUCLEIC ACID DEGLYCASE 1"/>
    <property type="match status" value="1"/>
</dbReference>
<dbReference type="PIRSF" id="PIRSF037798">
    <property type="entry name" value="Chaperone_HchA"/>
    <property type="match status" value="1"/>
</dbReference>
<dbReference type="SUPFAM" id="SSF52317">
    <property type="entry name" value="Class I glutamine amidotransferase-like"/>
    <property type="match status" value="1"/>
</dbReference>
<gene>
    <name evidence="1" type="primary">hchA</name>
    <name type="ordered locus">ECDH10B_2110</name>
</gene>
<sequence length="283" mass="31190">MTVQTSKNPQVDIAEDNAFFPSEYSLSQYTSPVSDLDGVDYPKPYRGKHKILVIAADERYLPTDNGKLFSTGNHPIETLLPLYHLHAAGFEFEVATISGLMTKFEYWAMPHKDEKVMPFFEQHKSLFRNPKKLADVVASLNADSEYAAIFVPGGHGALIGLPESQDVAAALQWAIKNDRFVISLCHGPAAFLALRHGDNPLNGYSICAFPDAADKQTPEIGYMPGHLTWYFGEELKKMGMNIINDDITGRVHKDRKLLTGDSPFAANALGKLAAQEMLAAYAG</sequence>
<keyword id="KW-0963">Cytoplasm</keyword>
<keyword id="KW-0227">DNA damage</keyword>
<keyword id="KW-0234">DNA repair</keyword>
<keyword id="KW-0378">Hydrolase</keyword>
<keyword id="KW-0479">Metal-binding</keyword>
<keyword id="KW-0346">Stress response</keyword>
<keyword id="KW-0862">Zinc</keyword>
<protein>
    <recommendedName>
        <fullName evidence="1">Protein/nucleic acid deglycase HchA</fullName>
        <ecNumber evidence="1">3.1.2.-</ecNumber>
        <ecNumber evidence="1">3.5.1.-</ecNumber>
        <ecNumber evidence="1">3.5.1.124</ecNumber>
    </recommendedName>
    <alternativeName>
        <fullName evidence="1">Maillard deglycase</fullName>
    </alternativeName>
</protein>